<protein>
    <recommendedName>
        <fullName evidence="1">3-dehydroquinate synthase</fullName>
        <shortName evidence="1">DHQS</shortName>
        <ecNumber evidence="1">4.2.3.4</ecNumber>
    </recommendedName>
</protein>
<gene>
    <name evidence="1" type="primary">aroB</name>
    <name type="ordered locus">PSPA7_5775</name>
</gene>
<accession>A6VDF9</accession>
<organism>
    <name type="scientific">Pseudomonas paraeruginosa (strain DSM 24068 / PA7)</name>
    <name type="common">Pseudomonas aeruginosa (strain PA7)</name>
    <dbReference type="NCBI Taxonomy" id="381754"/>
    <lineage>
        <taxon>Bacteria</taxon>
        <taxon>Pseudomonadati</taxon>
        <taxon>Pseudomonadota</taxon>
        <taxon>Gammaproteobacteria</taxon>
        <taxon>Pseudomonadales</taxon>
        <taxon>Pseudomonadaceae</taxon>
        <taxon>Pseudomonas</taxon>
        <taxon>Pseudomonas paraeruginosa</taxon>
    </lineage>
</organism>
<dbReference type="EC" id="4.2.3.4" evidence="1"/>
<dbReference type="EMBL" id="CP000744">
    <property type="protein sequence ID" value="ABR86195.1"/>
    <property type="molecule type" value="Genomic_DNA"/>
</dbReference>
<dbReference type="RefSeq" id="WP_012077719.1">
    <property type="nucleotide sequence ID" value="NC_009656.1"/>
</dbReference>
<dbReference type="SMR" id="A6VDF9"/>
<dbReference type="GeneID" id="77223575"/>
<dbReference type="KEGG" id="pap:PSPA7_5775"/>
<dbReference type="HOGENOM" id="CLU_001201_0_2_6"/>
<dbReference type="UniPathway" id="UPA00053">
    <property type="reaction ID" value="UER00085"/>
</dbReference>
<dbReference type="Proteomes" id="UP000001582">
    <property type="component" value="Chromosome"/>
</dbReference>
<dbReference type="GO" id="GO:0005737">
    <property type="term" value="C:cytoplasm"/>
    <property type="evidence" value="ECO:0007669"/>
    <property type="project" value="UniProtKB-SubCell"/>
</dbReference>
<dbReference type="GO" id="GO:0003856">
    <property type="term" value="F:3-dehydroquinate synthase activity"/>
    <property type="evidence" value="ECO:0007669"/>
    <property type="project" value="UniProtKB-UniRule"/>
</dbReference>
<dbReference type="GO" id="GO:0046872">
    <property type="term" value="F:metal ion binding"/>
    <property type="evidence" value="ECO:0007669"/>
    <property type="project" value="UniProtKB-KW"/>
</dbReference>
<dbReference type="GO" id="GO:0000166">
    <property type="term" value="F:nucleotide binding"/>
    <property type="evidence" value="ECO:0007669"/>
    <property type="project" value="UniProtKB-KW"/>
</dbReference>
<dbReference type="GO" id="GO:0008652">
    <property type="term" value="P:amino acid biosynthetic process"/>
    <property type="evidence" value="ECO:0007669"/>
    <property type="project" value="UniProtKB-KW"/>
</dbReference>
<dbReference type="GO" id="GO:0009073">
    <property type="term" value="P:aromatic amino acid family biosynthetic process"/>
    <property type="evidence" value="ECO:0007669"/>
    <property type="project" value="UniProtKB-KW"/>
</dbReference>
<dbReference type="GO" id="GO:0009423">
    <property type="term" value="P:chorismate biosynthetic process"/>
    <property type="evidence" value="ECO:0007669"/>
    <property type="project" value="UniProtKB-UniRule"/>
</dbReference>
<dbReference type="CDD" id="cd08195">
    <property type="entry name" value="DHQS"/>
    <property type="match status" value="1"/>
</dbReference>
<dbReference type="FunFam" id="1.20.1090.10:FF:000002">
    <property type="entry name" value="3-dehydroquinate synthase"/>
    <property type="match status" value="1"/>
</dbReference>
<dbReference type="FunFam" id="3.40.50.1970:FF:000001">
    <property type="entry name" value="3-dehydroquinate synthase"/>
    <property type="match status" value="1"/>
</dbReference>
<dbReference type="Gene3D" id="3.40.50.1970">
    <property type="match status" value="1"/>
</dbReference>
<dbReference type="Gene3D" id="1.20.1090.10">
    <property type="entry name" value="Dehydroquinate synthase-like - alpha domain"/>
    <property type="match status" value="1"/>
</dbReference>
<dbReference type="HAMAP" id="MF_00110">
    <property type="entry name" value="DHQ_synthase"/>
    <property type="match status" value="1"/>
</dbReference>
<dbReference type="InterPro" id="IPR050071">
    <property type="entry name" value="Dehydroquinate_synthase"/>
</dbReference>
<dbReference type="InterPro" id="IPR016037">
    <property type="entry name" value="DHQ_synth_AroB"/>
</dbReference>
<dbReference type="InterPro" id="IPR030963">
    <property type="entry name" value="DHQ_synth_fam"/>
</dbReference>
<dbReference type="InterPro" id="IPR030960">
    <property type="entry name" value="DHQS/DOIS_N"/>
</dbReference>
<dbReference type="InterPro" id="IPR056179">
    <property type="entry name" value="DHQS_C"/>
</dbReference>
<dbReference type="NCBIfam" id="TIGR01357">
    <property type="entry name" value="aroB"/>
    <property type="match status" value="1"/>
</dbReference>
<dbReference type="PANTHER" id="PTHR43622">
    <property type="entry name" value="3-DEHYDROQUINATE SYNTHASE"/>
    <property type="match status" value="1"/>
</dbReference>
<dbReference type="PANTHER" id="PTHR43622:SF7">
    <property type="entry name" value="3-DEHYDROQUINATE SYNTHASE, CHLOROPLASTIC"/>
    <property type="match status" value="1"/>
</dbReference>
<dbReference type="Pfam" id="PF01761">
    <property type="entry name" value="DHQ_synthase"/>
    <property type="match status" value="1"/>
</dbReference>
<dbReference type="Pfam" id="PF24621">
    <property type="entry name" value="DHQS_C"/>
    <property type="match status" value="1"/>
</dbReference>
<dbReference type="PIRSF" id="PIRSF001455">
    <property type="entry name" value="DHQ_synth"/>
    <property type="match status" value="1"/>
</dbReference>
<dbReference type="SUPFAM" id="SSF56796">
    <property type="entry name" value="Dehydroquinate synthase-like"/>
    <property type="match status" value="1"/>
</dbReference>
<name>AROB_PSEP7</name>
<sequence>MRTLNVDLGERSYPIYIGENLLGDAQWFAPHIVGRRVAVISNETVAPLYLETLLGALEGREVTRVVLPDGEAYKQWETLQSIFDALLQDRHDRKTTLIALGGGVIGDMAGFAAACYQRGVNFIQVPTTLLSQVDSSVGGKTGINHPLGKNMIGAFYQPQAVVIDTASLKTLPARELSAGLAEVIKYGFICDEPFITWLEEHMDALLALEPAAVTEAIERSCAAKARVVGADERESGVRATLNLGHTFGHAIETQQGYGVWLHGEAVGAGTVMALEMSHRLGWLSAAERDRGIRLLRRAGLPVVPPADMTAEDFMEHMAVDKKVLDGRLRLVLLQGLGNAVVTGDFPREILDATLRTDYRALADQLGDE</sequence>
<reference key="1">
    <citation type="submission" date="2007-06" db="EMBL/GenBank/DDBJ databases">
        <authorList>
            <person name="Dodson R.J."/>
            <person name="Harkins D."/>
            <person name="Paulsen I.T."/>
        </authorList>
    </citation>
    <scope>NUCLEOTIDE SEQUENCE [LARGE SCALE GENOMIC DNA]</scope>
    <source>
        <strain>DSM 24068 / PA7</strain>
    </source>
</reference>
<feature type="chain" id="PRO_1000094569" description="3-dehydroquinate synthase">
    <location>
        <begin position="1"/>
        <end position="368"/>
    </location>
</feature>
<feature type="binding site" evidence="1">
    <location>
        <begin position="69"/>
        <end position="74"/>
    </location>
    <ligand>
        <name>NAD(+)</name>
        <dbReference type="ChEBI" id="CHEBI:57540"/>
    </ligand>
</feature>
<feature type="binding site" evidence="1">
    <location>
        <begin position="103"/>
        <end position="107"/>
    </location>
    <ligand>
        <name>NAD(+)</name>
        <dbReference type="ChEBI" id="CHEBI:57540"/>
    </ligand>
</feature>
<feature type="binding site" evidence="1">
    <location>
        <begin position="127"/>
        <end position="128"/>
    </location>
    <ligand>
        <name>NAD(+)</name>
        <dbReference type="ChEBI" id="CHEBI:57540"/>
    </ligand>
</feature>
<feature type="binding site" evidence="1">
    <location>
        <position position="140"/>
    </location>
    <ligand>
        <name>NAD(+)</name>
        <dbReference type="ChEBI" id="CHEBI:57540"/>
    </ligand>
</feature>
<feature type="binding site" evidence="1">
    <location>
        <position position="149"/>
    </location>
    <ligand>
        <name>NAD(+)</name>
        <dbReference type="ChEBI" id="CHEBI:57540"/>
    </ligand>
</feature>
<feature type="binding site" evidence="1">
    <location>
        <position position="182"/>
    </location>
    <ligand>
        <name>Zn(2+)</name>
        <dbReference type="ChEBI" id="CHEBI:29105"/>
    </ligand>
</feature>
<feature type="binding site" evidence="1">
    <location>
        <position position="245"/>
    </location>
    <ligand>
        <name>Zn(2+)</name>
        <dbReference type="ChEBI" id="CHEBI:29105"/>
    </ligand>
</feature>
<feature type="binding site" evidence="1">
    <location>
        <position position="262"/>
    </location>
    <ligand>
        <name>Zn(2+)</name>
        <dbReference type="ChEBI" id="CHEBI:29105"/>
    </ligand>
</feature>
<evidence type="ECO:0000255" key="1">
    <source>
        <dbReference type="HAMAP-Rule" id="MF_00110"/>
    </source>
</evidence>
<comment type="function">
    <text evidence="1">Catalyzes the conversion of 3-deoxy-D-arabino-heptulosonate 7-phosphate (DAHP) to dehydroquinate (DHQ).</text>
</comment>
<comment type="catalytic activity">
    <reaction evidence="1">
        <text>7-phospho-2-dehydro-3-deoxy-D-arabino-heptonate = 3-dehydroquinate + phosphate</text>
        <dbReference type="Rhea" id="RHEA:21968"/>
        <dbReference type="ChEBI" id="CHEBI:32364"/>
        <dbReference type="ChEBI" id="CHEBI:43474"/>
        <dbReference type="ChEBI" id="CHEBI:58394"/>
        <dbReference type="EC" id="4.2.3.4"/>
    </reaction>
</comment>
<comment type="cofactor">
    <cofactor evidence="1">
        <name>Co(2+)</name>
        <dbReference type="ChEBI" id="CHEBI:48828"/>
    </cofactor>
    <cofactor evidence="1">
        <name>Zn(2+)</name>
        <dbReference type="ChEBI" id="CHEBI:29105"/>
    </cofactor>
    <text evidence="1">Binds 1 divalent metal cation per subunit. Can use either Co(2+) or Zn(2+).</text>
</comment>
<comment type="cofactor">
    <cofactor evidence="1">
        <name>NAD(+)</name>
        <dbReference type="ChEBI" id="CHEBI:57540"/>
    </cofactor>
</comment>
<comment type="pathway">
    <text evidence="1">Metabolic intermediate biosynthesis; chorismate biosynthesis; chorismate from D-erythrose 4-phosphate and phosphoenolpyruvate: step 2/7.</text>
</comment>
<comment type="subcellular location">
    <subcellularLocation>
        <location evidence="1">Cytoplasm</location>
    </subcellularLocation>
</comment>
<comment type="similarity">
    <text evidence="1">Belongs to the sugar phosphate cyclases superfamily. Dehydroquinate synthase family.</text>
</comment>
<proteinExistence type="inferred from homology"/>
<keyword id="KW-0028">Amino-acid biosynthesis</keyword>
<keyword id="KW-0057">Aromatic amino acid biosynthesis</keyword>
<keyword id="KW-0170">Cobalt</keyword>
<keyword id="KW-0963">Cytoplasm</keyword>
<keyword id="KW-0456">Lyase</keyword>
<keyword id="KW-0479">Metal-binding</keyword>
<keyword id="KW-0520">NAD</keyword>
<keyword id="KW-0547">Nucleotide-binding</keyword>
<keyword id="KW-0862">Zinc</keyword>